<organism>
    <name type="scientific">Leptospira biflexa serovar Patoc (strain Patoc 1 / ATCC 23582 / Paris)</name>
    <dbReference type="NCBI Taxonomy" id="456481"/>
    <lineage>
        <taxon>Bacteria</taxon>
        <taxon>Pseudomonadati</taxon>
        <taxon>Spirochaetota</taxon>
        <taxon>Spirochaetia</taxon>
        <taxon>Leptospirales</taxon>
        <taxon>Leptospiraceae</taxon>
        <taxon>Leptospira</taxon>
    </lineage>
</organism>
<protein>
    <recommendedName>
        <fullName evidence="1">Chaperone protein DnaJ</fullName>
    </recommendedName>
</protein>
<reference key="1">
    <citation type="journal article" date="2008" name="PLoS ONE">
        <title>Genome sequence of the saprophyte Leptospira biflexa provides insights into the evolution of Leptospira and the pathogenesis of leptospirosis.</title>
        <authorList>
            <person name="Picardeau M."/>
            <person name="Bulach D.M."/>
            <person name="Bouchier C."/>
            <person name="Zuerner R.L."/>
            <person name="Zidane N."/>
            <person name="Wilson P.J."/>
            <person name="Creno S."/>
            <person name="Kuczek E.S."/>
            <person name="Bommezzadri S."/>
            <person name="Davis J.C."/>
            <person name="McGrath A."/>
            <person name="Johnson M.J."/>
            <person name="Boursaux-Eude C."/>
            <person name="Seemann T."/>
            <person name="Rouy Z."/>
            <person name="Coppel R.L."/>
            <person name="Rood J.I."/>
            <person name="Lajus A."/>
            <person name="Davies J.K."/>
            <person name="Medigue C."/>
            <person name="Adler B."/>
        </authorList>
    </citation>
    <scope>NUCLEOTIDE SEQUENCE [LARGE SCALE GENOMIC DNA]</scope>
    <source>
        <strain>Patoc 1 / ATCC 23582 / Paris</strain>
    </source>
</reference>
<name>DNAJ_LEPBP</name>
<dbReference type="EMBL" id="CP000786">
    <property type="protein sequence ID" value="ABZ99442.1"/>
    <property type="molecule type" value="Genomic_DNA"/>
</dbReference>
<dbReference type="RefSeq" id="WP_012390298.1">
    <property type="nucleotide sequence ID" value="NC_010602.1"/>
</dbReference>
<dbReference type="SMR" id="B0SRF0"/>
<dbReference type="STRING" id="456481.LEPBI_I3378"/>
<dbReference type="KEGG" id="lbi:LEPBI_I3378"/>
<dbReference type="HOGENOM" id="CLU_017633_0_7_12"/>
<dbReference type="OrthoDB" id="9779889at2"/>
<dbReference type="BioCyc" id="LBIF456481:LEPBI_RS16555-MONOMER"/>
<dbReference type="Proteomes" id="UP000001847">
    <property type="component" value="Chromosome I"/>
</dbReference>
<dbReference type="GO" id="GO:0005737">
    <property type="term" value="C:cytoplasm"/>
    <property type="evidence" value="ECO:0007669"/>
    <property type="project" value="UniProtKB-SubCell"/>
</dbReference>
<dbReference type="GO" id="GO:0005524">
    <property type="term" value="F:ATP binding"/>
    <property type="evidence" value="ECO:0007669"/>
    <property type="project" value="InterPro"/>
</dbReference>
<dbReference type="GO" id="GO:0031072">
    <property type="term" value="F:heat shock protein binding"/>
    <property type="evidence" value="ECO:0007669"/>
    <property type="project" value="InterPro"/>
</dbReference>
<dbReference type="GO" id="GO:0051082">
    <property type="term" value="F:unfolded protein binding"/>
    <property type="evidence" value="ECO:0007669"/>
    <property type="project" value="UniProtKB-UniRule"/>
</dbReference>
<dbReference type="GO" id="GO:0008270">
    <property type="term" value="F:zinc ion binding"/>
    <property type="evidence" value="ECO:0007669"/>
    <property type="project" value="UniProtKB-UniRule"/>
</dbReference>
<dbReference type="GO" id="GO:0051085">
    <property type="term" value="P:chaperone cofactor-dependent protein refolding"/>
    <property type="evidence" value="ECO:0007669"/>
    <property type="project" value="TreeGrafter"/>
</dbReference>
<dbReference type="GO" id="GO:0006260">
    <property type="term" value="P:DNA replication"/>
    <property type="evidence" value="ECO:0007669"/>
    <property type="project" value="UniProtKB-KW"/>
</dbReference>
<dbReference type="GO" id="GO:0042026">
    <property type="term" value="P:protein refolding"/>
    <property type="evidence" value="ECO:0007669"/>
    <property type="project" value="TreeGrafter"/>
</dbReference>
<dbReference type="GO" id="GO:0009408">
    <property type="term" value="P:response to heat"/>
    <property type="evidence" value="ECO:0007669"/>
    <property type="project" value="InterPro"/>
</dbReference>
<dbReference type="CDD" id="cd06257">
    <property type="entry name" value="DnaJ"/>
    <property type="match status" value="1"/>
</dbReference>
<dbReference type="CDD" id="cd10747">
    <property type="entry name" value="DnaJ_C"/>
    <property type="match status" value="1"/>
</dbReference>
<dbReference type="CDD" id="cd10719">
    <property type="entry name" value="DnaJ_zf"/>
    <property type="match status" value="1"/>
</dbReference>
<dbReference type="FunFam" id="1.10.287.110:FF:000034">
    <property type="entry name" value="Chaperone protein DnaJ"/>
    <property type="match status" value="1"/>
</dbReference>
<dbReference type="FunFam" id="2.60.260.20:FF:000005">
    <property type="entry name" value="Chaperone protein dnaJ 1, mitochondrial"/>
    <property type="match status" value="1"/>
</dbReference>
<dbReference type="FunFam" id="2.10.230.10:FF:000002">
    <property type="entry name" value="Molecular chaperone DnaJ"/>
    <property type="match status" value="1"/>
</dbReference>
<dbReference type="Gene3D" id="1.10.287.110">
    <property type="entry name" value="DnaJ domain"/>
    <property type="match status" value="1"/>
</dbReference>
<dbReference type="Gene3D" id="2.10.230.10">
    <property type="entry name" value="Heat shock protein DnaJ, cysteine-rich domain"/>
    <property type="match status" value="1"/>
</dbReference>
<dbReference type="Gene3D" id="2.60.260.20">
    <property type="entry name" value="Urease metallochaperone UreE, N-terminal domain"/>
    <property type="match status" value="2"/>
</dbReference>
<dbReference type="HAMAP" id="MF_01152">
    <property type="entry name" value="DnaJ"/>
    <property type="match status" value="1"/>
</dbReference>
<dbReference type="InterPro" id="IPR012724">
    <property type="entry name" value="DnaJ"/>
</dbReference>
<dbReference type="InterPro" id="IPR002939">
    <property type="entry name" value="DnaJ_C"/>
</dbReference>
<dbReference type="InterPro" id="IPR001623">
    <property type="entry name" value="DnaJ_domain"/>
</dbReference>
<dbReference type="InterPro" id="IPR018253">
    <property type="entry name" value="DnaJ_domain_CS"/>
</dbReference>
<dbReference type="InterPro" id="IPR008971">
    <property type="entry name" value="HSP40/DnaJ_pept-bd"/>
</dbReference>
<dbReference type="InterPro" id="IPR001305">
    <property type="entry name" value="HSP_DnaJ_Cys-rich_dom"/>
</dbReference>
<dbReference type="InterPro" id="IPR036410">
    <property type="entry name" value="HSP_DnaJ_Cys-rich_dom_sf"/>
</dbReference>
<dbReference type="InterPro" id="IPR036869">
    <property type="entry name" value="J_dom_sf"/>
</dbReference>
<dbReference type="NCBIfam" id="TIGR02349">
    <property type="entry name" value="DnaJ_bact"/>
    <property type="match status" value="1"/>
</dbReference>
<dbReference type="NCBIfam" id="NF008035">
    <property type="entry name" value="PRK10767.1"/>
    <property type="match status" value="1"/>
</dbReference>
<dbReference type="NCBIfam" id="NF010879">
    <property type="entry name" value="PRK14286.1"/>
    <property type="match status" value="1"/>
</dbReference>
<dbReference type="PANTHER" id="PTHR43096:SF48">
    <property type="entry name" value="CHAPERONE PROTEIN DNAJ"/>
    <property type="match status" value="1"/>
</dbReference>
<dbReference type="PANTHER" id="PTHR43096">
    <property type="entry name" value="DNAJ HOMOLOG 1, MITOCHONDRIAL-RELATED"/>
    <property type="match status" value="1"/>
</dbReference>
<dbReference type="Pfam" id="PF00226">
    <property type="entry name" value="DnaJ"/>
    <property type="match status" value="1"/>
</dbReference>
<dbReference type="Pfam" id="PF01556">
    <property type="entry name" value="DnaJ_C"/>
    <property type="match status" value="1"/>
</dbReference>
<dbReference type="Pfam" id="PF00684">
    <property type="entry name" value="DnaJ_CXXCXGXG"/>
    <property type="match status" value="1"/>
</dbReference>
<dbReference type="PRINTS" id="PR00625">
    <property type="entry name" value="JDOMAIN"/>
</dbReference>
<dbReference type="SMART" id="SM00271">
    <property type="entry name" value="DnaJ"/>
    <property type="match status" value="1"/>
</dbReference>
<dbReference type="SUPFAM" id="SSF46565">
    <property type="entry name" value="Chaperone J-domain"/>
    <property type="match status" value="1"/>
</dbReference>
<dbReference type="SUPFAM" id="SSF57938">
    <property type="entry name" value="DnaJ/Hsp40 cysteine-rich domain"/>
    <property type="match status" value="1"/>
</dbReference>
<dbReference type="SUPFAM" id="SSF49493">
    <property type="entry name" value="HSP40/DnaJ peptide-binding domain"/>
    <property type="match status" value="2"/>
</dbReference>
<dbReference type="PROSITE" id="PS00636">
    <property type="entry name" value="DNAJ_1"/>
    <property type="match status" value="1"/>
</dbReference>
<dbReference type="PROSITE" id="PS50076">
    <property type="entry name" value="DNAJ_2"/>
    <property type="match status" value="1"/>
</dbReference>
<dbReference type="PROSITE" id="PS51188">
    <property type="entry name" value="ZF_CR"/>
    <property type="match status" value="1"/>
</dbReference>
<keyword id="KW-0143">Chaperone</keyword>
<keyword id="KW-0963">Cytoplasm</keyword>
<keyword id="KW-0235">DNA replication</keyword>
<keyword id="KW-0479">Metal-binding</keyword>
<keyword id="KW-1185">Reference proteome</keyword>
<keyword id="KW-0677">Repeat</keyword>
<keyword id="KW-0346">Stress response</keyword>
<keyword id="KW-0862">Zinc</keyword>
<keyword id="KW-0863">Zinc-finger</keyword>
<evidence type="ECO:0000255" key="1">
    <source>
        <dbReference type="HAMAP-Rule" id="MF_01152"/>
    </source>
</evidence>
<comment type="function">
    <text evidence="1">Participates actively in the response to hyperosmotic and heat shock by preventing the aggregation of stress-denatured proteins and by disaggregating proteins, also in an autonomous, DnaK-independent fashion. Unfolded proteins bind initially to DnaJ; upon interaction with the DnaJ-bound protein, DnaK hydrolyzes its bound ATP, resulting in the formation of a stable complex. GrpE releases ADP from DnaK; ATP binding to DnaK triggers the release of the substrate protein, thus completing the reaction cycle. Several rounds of ATP-dependent interactions between DnaJ, DnaK and GrpE are required for fully efficient folding. Also involved, together with DnaK and GrpE, in the DNA replication of plasmids through activation of initiation proteins.</text>
</comment>
<comment type="cofactor">
    <cofactor evidence="1">
        <name>Zn(2+)</name>
        <dbReference type="ChEBI" id="CHEBI:29105"/>
    </cofactor>
    <text evidence="1">Binds 2 Zn(2+) ions per monomer.</text>
</comment>
<comment type="subunit">
    <text evidence="1">Homodimer.</text>
</comment>
<comment type="subcellular location">
    <subcellularLocation>
        <location evidence="1">Cytoplasm</location>
    </subcellularLocation>
</comment>
<comment type="domain">
    <text evidence="1">The J domain is necessary and sufficient to stimulate DnaK ATPase activity. Zinc center 1 plays an important role in the autonomous, DnaK-independent chaperone activity of DnaJ. Zinc center 2 is essential for interaction with DnaK and for DnaJ activity.</text>
</comment>
<comment type="similarity">
    <text evidence="1">Belongs to the DnaJ family.</text>
</comment>
<gene>
    <name evidence="1" type="primary">dnaJ</name>
    <name type="ordered locus">LEPBI_I3378</name>
</gene>
<feature type="chain" id="PRO_1000137703" description="Chaperone protein DnaJ">
    <location>
        <begin position="1"/>
        <end position="375"/>
    </location>
</feature>
<feature type="domain" description="J" evidence="1">
    <location>
        <begin position="5"/>
        <end position="70"/>
    </location>
</feature>
<feature type="repeat" description="CXXCXGXG motif">
    <location>
        <begin position="155"/>
        <end position="162"/>
    </location>
</feature>
<feature type="repeat" description="CXXCXGXG motif">
    <location>
        <begin position="172"/>
        <end position="179"/>
    </location>
</feature>
<feature type="repeat" description="CXXCXGXG motif">
    <location>
        <begin position="194"/>
        <end position="201"/>
    </location>
</feature>
<feature type="repeat" description="CXXCXGXG motif">
    <location>
        <begin position="208"/>
        <end position="215"/>
    </location>
</feature>
<feature type="zinc finger region" description="CR-type" evidence="1">
    <location>
        <begin position="142"/>
        <end position="220"/>
    </location>
</feature>
<feature type="binding site" evidence="1">
    <location>
        <position position="155"/>
    </location>
    <ligand>
        <name>Zn(2+)</name>
        <dbReference type="ChEBI" id="CHEBI:29105"/>
        <label>1</label>
    </ligand>
</feature>
<feature type="binding site" evidence="1">
    <location>
        <position position="158"/>
    </location>
    <ligand>
        <name>Zn(2+)</name>
        <dbReference type="ChEBI" id="CHEBI:29105"/>
        <label>1</label>
    </ligand>
</feature>
<feature type="binding site" evidence="1">
    <location>
        <position position="172"/>
    </location>
    <ligand>
        <name>Zn(2+)</name>
        <dbReference type="ChEBI" id="CHEBI:29105"/>
        <label>2</label>
    </ligand>
</feature>
<feature type="binding site" evidence="1">
    <location>
        <position position="175"/>
    </location>
    <ligand>
        <name>Zn(2+)</name>
        <dbReference type="ChEBI" id="CHEBI:29105"/>
        <label>2</label>
    </ligand>
</feature>
<feature type="binding site" evidence="1">
    <location>
        <position position="194"/>
    </location>
    <ligand>
        <name>Zn(2+)</name>
        <dbReference type="ChEBI" id="CHEBI:29105"/>
        <label>2</label>
    </ligand>
</feature>
<feature type="binding site" evidence="1">
    <location>
        <position position="197"/>
    </location>
    <ligand>
        <name>Zn(2+)</name>
        <dbReference type="ChEBI" id="CHEBI:29105"/>
        <label>2</label>
    </ligand>
</feature>
<feature type="binding site" evidence="1">
    <location>
        <position position="208"/>
    </location>
    <ligand>
        <name>Zn(2+)</name>
        <dbReference type="ChEBI" id="CHEBI:29105"/>
        <label>1</label>
    </ligand>
</feature>
<feature type="binding site" evidence="1">
    <location>
        <position position="211"/>
    </location>
    <ligand>
        <name>Zn(2+)</name>
        <dbReference type="ChEBI" id="CHEBI:29105"/>
        <label>1</label>
    </ligand>
</feature>
<proteinExistence type="inferred from homology"/>
<accession>B0SRF0</accession>
<sequence length="375" mass="40164">MSDRGYYEVLGVSKGASDDEIKSAYRKLAIKYHPDKNKGDKEAEEKFKEATEAYEVLRDPQKRQAYDQFGKAGVNAGAGGGYGAGAYTDFSDIFGDFGDIFSEFFGGGGGGGSRGGGRRSGPQRGSDLRYNLEVSLEDAALGKEYKIEIPRLETCVDCTGSGASKGSSPTVCPDCSGTGQVRRTQGFFSVTTTCPRCKGKGKVISNPCKTCKGEGLTEKRRTIHIKIPAGVESGSRLKVSGEGESGPNGGPSGDLYVVTHIKKHPVFERQGNDLIVQKSISLSMACLGGEIEVPSIDGKTIQLKIPEGTESGQIFRLKGHGIPYLGSYGKGDQHVIIKVEIPKKLSKKQKELMEEFARESGEKVGSGGKSKLFFR</sequence>